<reference key="1">
    <citation type="journal article" date="2008" name="PLoS Genet.">
        <title>Complete genome sequence of the N2-fixing broad host range endophyte Klebsiella pneumoniae 342 and virulence predictions verified in mice.</title>
        <authorList>
            <person name="Fouts D.E."/>
            <person name="Tyler H.L."/>
            <person name="DeBoy R.T."/>
            <person name="Daugherty S."/>
            <person name="Ren Q."/>
            <person name="Badger J.H."/>
            <person name="Durkin A.S."/>
            <person name="Huot H."/>
            <person name="Shrivastava S."/>
            <person name="Kothari S."/>
            <person name="Dodson R.J."/>
            <person name="Mohamoud Y."/>
            <person name="Khouri H."/>
            <person name="Roesch L.F.W."/>
            <person name="Krogfelt K.A."/>
            <person name="Struve C."/>
            <person name="Triplett E.W."/>
            <person name="Methe B.A."/>
        </authorList>
    </citation>
    <scope>NUCLEOTIDE SEQUENCE [LARGE SCALE GENOMIC DNA]</scope>
    <source>
        <strain>342</strain>
    </source>
</reference>
<evidence type="ECO:0000255" key="1">
    <source>
        <dbReference type="HAMAP-Rule" id="MF_00295"/>
    </source>
</evidence>
<sequence length="309" mass="35677">MPIRVQDELPAVSFLRNENVFVMTTTRATTQEIRPLKVLILNLMPKKIETENQFLRLLSNSPLQVDIQLLRIDARESRNTPAEHLNNFYCNFDEICDQNFDGLIVTGAPLGLVEFNDVAYWPQIKQVLEWAKDHVTSTLFVCWAVQAALNILYGIPKQTRAEKISGVYEHHILHPHALLTRGFDDSFLAPHSRYADFPAGLIRDYTDLEILAETEEGDAYLFASKDKRIAFVTGHPEYDANTLASEYFRDVEAGLNPEVPYNYFPQNDPQNKPRATWRSHGNLLFANWLNYYVYQITPYDLRHMNPTLE</sequence>
<organism>
    <name type="scientific">Klebsiella pneumoniae (strain 342)</name>
    <dbReference type="NCBI Taxonomy" id="507522"/>
    <lineage>
        <taxon>Bacteria</taxon>
        <taxon>Pseudomonadati</taxon>
        <taxon>Pseudomonadota</taxon>
        <taxon>Gammaproteobacteria</taxon>
        <taxon>Enterobacterales</taxon>
        <taxon>Enterobacteriaceae</taxon>
        <taxon>Klebsiella/Raoultella group</taxon>
        <taxon>Klebsiella</taxon>
        <taxon>Klebsiella pneumoniae complex</taxon>
    </lineage>
</organism>
<comment type="function">
    <text evidence="1">Transfers a succinyl group from succinyl-CoA to L-homoserine, forming succinyl-L-homoserine.</text>
</comment>
<comment type="catalytic activity">
    <reaction evidence="1">
        <text>L-homoserine + succinyl-CoA = O-succinyl-L-homoserine + CoA</text>
        <dbReference type="Rhea" id="RHEA:22008"/>
        <dbReference type="ChEBI" id="CHEBI:57287"/>
        <dbReference type="ChEBI" id="CHEBI:57292"/>
        <dbReference type="ChEBI" id="CHEBI:57476"/>
        <dbReference type="ChEBI" id="CHEBI:57661"/>
        <dbReference type="EC" id="2.3.1.46"/>
    </reaction>
</comment>
<comment type="pathway">
    <text evidence="1">Amino-acid biosynthesis; L-methionine biosynthesis via de novo pathway; O-succinyl-L-homoserine from L-homoserine: step 1/1.</text>
</comment>
<comment type="subcellular location">
    <subcellularLocation>
        <location evidence="1">Cytoplasm</location>
    </subcellularLocation>
</comment>
<comment type="similarity">
    <text evidence="1">Belongs to the MetA family.</text>
</comment>
<dbReference type="EC" id="2.3.1.46" evidence="1"/>
<dbReference type="EMBL" id="CP000964">
    <property type="protein sequence ID" value="ACI08772.1"/>
    <property type="molecule type" value="Genomic_DNA"/>
</dbReference>
<dbReference type="SMR" id="B5XYD0"/>
<dbReference type="KEGG" id="kpe:KPK_5280"/>
<dbReference type="HOGENOM" id="CLU_057851_0_1_6"/>
<dbReference type="UniPathway" id="UPA00051">
    <property type="reaction ID" value="UER00075"/>
</dbReference>
<dbReference type="Proteomes" id="UP000001734">
    <property type="component" value="Chromosome"/>
</dbReference>
<dbReference type="GO" id="GO:0005737">
    <property type="term" value="C:cytoplasm"/>
    <property type="evidence" value="ECO:0007669"/>
    <property type="project" value="UniProtKB-SubCell"/>
</dbReference>
<dbReference type="GO" id="GO:0004414">
    <property type="term" value="F:homoserine O-acetyltransferase activity"/>
    <property type="evidence" value="ECO:0007669"/>
    <property type="project" value="UniProtKB-UniRule"/>
</dbReference>
<dbReference type="GO" id="GO:0008899">
    <property type="term" value="F:homoserine O-succinyltransferase activity"/>
    <property type="evidence" value="ECO:0007669"/>
    <property type="project" value="UniProtKB-EC"/>
</dbReference>
<dbReference type="GO" id="GO:0019281">
    <property type="term" value="P:L-methionine biosynthetic process from homoserine via O-succinyl-L-homoserine and cystathionine"/>
    <property type="evidence" value="ECO:0007669"/>
    <property type="project" value="InterPro"/>
</dbReference>
<dbReference type="CDD" id="cd03131">
    <property type="entry name" value="GATase1_HTS"/>
    <property type="match status" value="1"/>
</dbReference>
<dbReference type="FunFam" id="3.40.50.880:FF:000004">
    <property type="entry name" value="Homoserine O-succinyltransferase"/>
    <property type="match status" value="1"/>
</dbReference>
<dbReference type="Gene3D" id="3.40.50.880">
    <property type="match status" value="1"/>
</dbReference>
<dbReference type="HAMAP" id="MF_00295">
    <property type="entry name" value="MetA_acyltransf"/>
    <property type="match status" value="1"/>
</dbReference>
<dbReference type="InterPro" id="IPR029062">
    <property type="entry name" value="Class_I_gatase-like"/>
</dbReference>
<dbReference type="InterPro" id="IPR005697">
    <property type="entry name" value="HST_MetA"/>
</dbReference>
<dbReference type="InterPro" id="IPR033752">
    <property type="entry name" value="MetA_family"/>
</dbReference>
<dbReference type="NCBIfam" id="TIGR01001">
    <property type="entry name" value="metA"/>
    <property type="match status" value="1"/>
</dbReference>
<dbReference type="PANTHER" id="PTHR20919">
    <property type="entry name" value="HOMOSERINE O-SUCCINYLTRANSFERASE"/>
    <property type="match status" value="1"/>
</dbReference>
<dbReference type="PANTHER" id="PTHR20919:SF0">
    <property type="entry name" value="HOMOSERINE O-SUCCINYLTRANSFERASE"/>
    <property type="match status" value="1"/>
</dbReference>
<dbReference type="Pfam" id="PF04204">
    <property type="entry name" value="HTS"/>
    <property type="match status" value="1"/>
</dbReference>
<dbReference type="PIRSF" id="PIRSF000450">
    <property type="entry name" value="H_ser_succinyltr"/>
    <property type="match status" value="1"/>
</dbReference>
<dbReference type="SUPFAM" id="SSF52317">
    <property type="entry name" value="Class I glutamine amidotransferase-like"/>
    <property type="match status" value="1"/>
</dbReference>
<protein>
    <recommendedName>
        <fullName evidence="1">Homoserine O-succinyltransferase</fullName>
        <shortName evidence="1">HST</shortName>
        <ecNumber evidence="1">2.3.1.46</ecNumber>
    </recommendedName>
    <alternativeName>
        <fullName evidence="1">Homoserine transsuccinylase</fullName>
        <shortName evidence="1">HTS</shortName>
    </alternativeName>
</protein>
<gene>
    <name evidence="1" type="primary">metAS</name>
    <name type="ordered locus">KPK_5280</name>
</gene>
<name>METAS_KLEP3</name>
<keyword id="KW-0012">Acyltransferase</keyword>
<keyword id="KW-0028">Amino-acid biosynthesis</keyword>
<keyword id="KW-0963">Cytoplasm</keyword>
<keyword id="KW-0486">Methionine biosynthesis</keyword>
<keyword id="KW-0808">Transferase</keyword>
<accession>B5XYD0</accession>
<proteinExistence type="inferred from homology"/>
<feature type="chain" id="PRO_1000115182" description="Homoserine O-succinyltransferase">
    <location>
        <begin position="1"/>
        <end position="309"/>
    </location>
</feature>
<feature type="active site" description="Acyl-thioester intermediate" evidence="1">
    <location>
        <position position="142"/>
    </location>
</feature>
<feature type="active site" description="Proton acceptor" evidence="1">
    <location>
        <position position="235"/>
    </location>
</feature>
<feature type="active site" evidence="1">
    <location>
        <position position="237"/>
    </location>
</feature>
<feature type="binding site" evidence="1">
    <location>
        <position position="163"/>
    </location>
    <ligand>
        <name>substrate</name>
    </ligand>
</feature>
<feature type="binding site" evidence="1">
    <location>
        <position position="192"/>
    </location>
    <ligand>
        <name>substrate</name>
    </ligand>
</feature>
<feature type="binding site" evidence="1">
    <location>
        <position position="249"/>
    </location>
    <ligand>
        <name>substrate</name>
    </ligand>
</feature>
<feature type="site" description="Important for acyl-CoA specificity" evidence="1">
    <location>
        <position position="111"/>
    </location>
</feature>
<feature type="site" description="Important for substrate specificity" evidence="1">
    <location>
        <position position="192"/>
    </location>
</feature>